<organism>
    <name type="scientific">Aspergillus oryzae (strain ATCC 42149 / RIB 40)</name>
    <name type="common">Yellow koji mold</name>
    <dbReference type="NCBI Taxonomy" id="510516"/>
    <lineage>
        <taxon>Eukaryota</taxon>
        <taxon>Fungi</taxon>
        <taxon>Dikarya</taxon>
        <taxon>Ascomycota</taxon>
        <taxon>Pezizomycotina</taxon>
        <taxon>Eurotiomycetes</taxon>
        <taxon>Eurotiomycetidae</taxon>
        <taxon>Eurotiales</taxon>
        <taxon>Aspergillaceae</taxon>
        <taxon>Aspergillus</taxon>
        <taxon>Aspergillus subgen. Circumdati</taxon>
    </lineage>
</organism>
<comment type="function">
    <text evidence="2 5">Histidinol dehydrogenase homolog; part of the gene cluster that mediates the biosynthesis of oryzines, natural products with an unusual maleidride backbone (PubMed:30104550). The two subunits of the fungal fatty acid synthase oryfasA and oryfasB probably form octenoic acid (Probable). This fatty acid is most likely activated by the acyl-CoA ligase oryP to give octenyl-CoA before the citrate synthase-like protein oryE catalyzes condensation with oxaloacetate to form tricarboxylic acid (Probable). The next steps of the pathways are conjectural, but a favorite possible route has been proposed, beginning with decarboxylation and concomitant dehydration by the decarboxylase oryM, followed by tautomerization, which may lead to the production of a diene intermediate (Probable). Reduction of this diene intermediate could give the known metabolite piliformic acid (Probable). On the pathway to oryzine B and oryzine A, however, hydroxylation of the diene by the alpha-ketoglutarate-dependent dioxygenase oryG and lactonisation by the lactonohydrolases oryH or oryL could give oryzine B directly (Probable). Finally, enoyl reduction by the dehydrogenase oryD would then convert oryzine B into oryzine A (Probable).</text>
</comment>
<comment type="cofactor">
    <cofactor evidence="1">
        <name>Zn(2+)</name>
        <dbReference type="ChEBI" id="CHEBI:29105"/>
    </cofactor>
    <text evidence="1">Binds 1 zinc ion per subunit.</text>
</comment>
<comment type="pathway">
    <text evidence="5">Secondary metabolite biosynthesis.</text>
</comment>
<comment type="similarity">
    <text evidence="4">Belongs to the histidinol dehydrogenase family.</text>
</comment>
<comment type="sequence caution" evidence="5">
    <conflict type="erroneous gene model prediction">
        <sequence resource="EMBL-CDS" id="BAE66074"/>
    </conflict>
    <text>The predicted gene AO090010000172 has been split into 2 genes: oryC and oryD.</text>
</comment>
<keyword id="KW-0479">Metal-binding</keyword>
<keyword id="KW-0560">Oxidoreductase</keyword>
<keyword id="KW-1185">Reference proteome</keyword>
<keyword id="KW-0862">Zinc</keyword>
<sequence>MPVGTEAIRKVDFLAGTGNRFVAEGKRQLFGEVGIDLFAGPTESLVLADETADPFTVATDLISQAGHGPDTPAVLITTCPKVGRETIEIVNKLLSATDLSTPDVAKVSWDAFGEVIIVDTLKELWELGDHYASEQVQVFTKDPRDALDKMSNYGALFLGENTCVSYGDKVIGKNHVLLTRTTARYTGGLWVGKYLKTCTYQEVTSPESSGKLGRLCGRAARPERFEAHARSGDLQANRHM</sequence>
<reference key="1">
    <citation type="journal article" date="2005" name="Nature">
        <title>Genome sequencing and analysis of Aspergillus oryzae.</title>
        <authorList>
            <person name="Machida M."/>
            <person name="Asai K."/>
            <person name="Sano M."/>
            <person name="Tanaka T."/>
            <person name="Kumagai T."/>
            <person name="Terai G."/>
            <person name="Kusumoto K."/>
            <person name="Arima T."/>
            <person name="Akita O."/>
            <person name="Kashiwagi Y."/>
            <person name="Abe K."/>
            <person name="Gomi K."/>
            <person name="Horiuchi H."/>
            <person name="Kitamoto K."/>
            <person name="Kobayashi T."/>
            <person name="Takeuchi M."/>
            <person name="Denning D.W."/>
            <person name="Galagan J.E."/>
            <person name="Nierman W.C."/>
            <person name="Yu J."/>
            <person name="Archer D.B."/>
            <person name="Bennett J.W."/>
            <person name="Bhatnagar D."/>
            <person name="Cleveland T.E."/>
            <person name="Fedorova N.D."/>
            <person name="Gotoh O."/>
            <person name="Horikawa H."/>
            <person name="Hosoyama A."/>
            <person name="Ichinomiya M."/>
            <person name="Igarashi R."/>
            <person name="Iwashita K."/>
            <person name="Juvvadi P.R."/>
            <person name="Kato M."/>
            <person name="Kato Y."/>
            <person name="Kin T."/>
            <person name="Kokubun A."/>
            <person name="Maeda H."/>
            <person name="Maeyama N."/>
            <person name="Maruyama J."/>
            <person name="Nagasaki H."/>
            <person name="Nakajima T."/>
            <person name="Oda K."/>
            <person name="Okada K."/>
            <person name="Paulsen I."/>
            <person name="Sakamoto K."/>
            <person name="Sawano T."/>
            <person name="Takahashi M."/>
            <person name="Takase K."/>
            <person name="Terabayashi Y."/>
            <person name="Wortman J.R."/>
            <person name="Yamada O."/>
            <person name="Yamagata Y."/>
            <person name="Anazawa H."/>
            <person name="Hata Y."/>
            <person name="Koide Y."/>
            <person name="Komori T."/>
            <person name="Koyama Y."/>
            <person name="Minetoki T."/>
            <person name="Suharnan S."/>
            <person name="Tanaka A."/>
            <person name="Isono K."/>
            <person name="Kuhara S."/>
            <person name="Ogasawara N."/>
            <person name="Kikuchi H."/>
        </authorList>
    </citation>
    <scope>NUCLEOTIDE SEQUENCE [LARGE SCALE GENOMIC DNA]</scope>
    <source>
        <strain>ATCC 42149 / RIB 40</strain>
    </source>
</reference>
<reference key="2">
    <citation type="journal article" date="2018" name="J. Fungi">
        <title>Oryzines A &amp; B, maleidride congeners from Aspergillus oryzae and their putative biosynthesis.</title>
        <authorList>
            <person name="Wasil Z."/>
            <person name="Kuhnert E."/>
            <person name="Simpson T.J."/>
            <person name="Cox R.J."/>
        </authorList>
    </citation>
    <scope>FUNCTION</scope>
    <scope>PATHWAY</scope>
</reference>
<gene>
    <name evidence="3" type="primary">oryD</name>
    <name type="ORF">AO090010000172</name>
</gene>
<dbReference type="EC" id="1.1.-.-" evidence="5"/>
<dbReference type="EMBL" id="BA000056">
    <property type="protein sequence ID" value="BAE66074.1"/>
    <property type="status" value="ALT_SEQ"/>
    <property type="molecule type" value="Genomic_DNA"/>
</dbReference>
<dbReference type="SMR" id="P9WEZ5"/>
<dbReference type="EnsemblFungi" id="BAE66074">
    <property type="protein sequence ID" value="BAE66074"/>
    <property type="gene ID" value="AO090010000172"/>
</dbReference>
<dbReference type="Proteomes" id="UP000006564">
    <property type="component" value="Chromosome 8"/>
</dbReference>
<dbReference type="GO" id="GO:0005829">
    <property type="term" value="C:cytosol"/>
    <property type="evidence" value="ECO:0007669"/>
    <property type="project" value="TreeGrafter"/>
</dbReference>
<dbReference type="GO" id="GO:0004399">
    <property type="term" value="F:histidinol dehydrogenase activity"/>
    <property type="evidence" value="ECO:0007669"/>
    <property type="project" value="TreeGrafter"/>
</dbReference>
<dbReference type="GO" id="GO:0046872">
    <property type="term" value="F:metal ion binding"/>
    <property type="evidence" value="ECO:0007669"/>
    <property type="project" value="UniProtKB-KW"/>
</dbReference>
<dbReference type="GO" id="GO:0051287">
    <property type="term" value="F:NAD binding"/>
    <property type="evidence" value="ECO:0007669"/>
    <property type="project" value="InterPro"/>
</dbReference>
<dbReference type="GO" id="GO:0000105">
    <property type="term" value="P:L-histidine biosynthetic process"/>
    <property type="evidence" value="ECO:0007669"/>
    <property type="project" value="TreeGrafter"/>
</dbReference>
<dbReference type="FunFam" id="3.40.50.1980:FF:000001">
    <property type="entry name" value="Histidinol dehydrogenase"/>
    <property type="match status" value="1"/>
</dbReference>
<dbReference type="Gene3D" id="3.40.50.1980">
    <property type="entry name" value="Nitrogenase molybdenum iron protein domain"/>
    <property type="match status" value="1"/>
</dbReference>
<dbReference type="InterPro" id="IPR016161">
    <property type="entry name" value="Ald_DH/histidinol_DH"/>
</dbReference>
<dbReference type="InterPro" id="IPR012131">
    <property type="entry name" value="Hstdl_DH"/>
</dbReference>
<dbReference type="PANTHER" id="PTHR21256:SF14">
    <property type="entry name" value="HISTIDINOL DEHYDROGENASE"/>
    <property type="match status" value="1"/>
</dbReference>
<dbReference type="PANTHER" id="PTHR21256">
    <property type="entry name" value="HISTIDINOL DEHYDROGENASE HDH"/>
    <property type="match status" value="1"/>
</dbReference>
<dbReference type="Pfam" id="PF00815">
    <property type="entry name" value="Histidinol_dh"/>
    <property type="match status" value="1"/>
</dbReference>
<dbReference type="PRINTS" id="PR00083">
    <property type="entry name" value="HOLDHDRGNASE"/>
</dbReference>
<dbReference type="SUPFAM" id="SSF53720">
    <property type="entry name" value="ALDH-like"/>
    <property type="match status" value="1"/>
</dbReference>
<protein>
    <recommendedName>
        <fullName evidence="3">Histidinol dehydrogenase homolog oryD</fullName>
        <ecNumber evidence="5">1.1.-.-</ecNumber>
    </recommendedName>
    <alternativeName>
        <fullName evidence="3">Oryzines biosynthesis cluster protein D</fullName>
    </alternativeName>
</protein>
<accession>P9WEZ5</accession>
<accession>Q2TXE9</accession>
<name>ORYD_ASPOR</name>
<feature type="chain" id="PRO_0000450490" description="Histidinol dehydrogenase homolog oryD">
    <location>
        <begin position="1"/>
        <end position="240"/>
    </location>
</feature>
<feature type="active site" description="Proton acceptor" evidence="1">
    <location>
        <position position="134"/>
    </location>
</feature>
<feature type="binding site" evidence="1">
    <location>
        <position position="64"/>
    </location>
    <ligand>
        <name>Zn(2+)</name>
        <dbReference type="ChEBI" id="CHEBI:29105"/>
    </ligand>
</feature>
<feature type="binding site" evidence="1">
    <location>
        <position position="67"/>
    </location>
    <ligand>
        <name>Zn(2+)</name>
        <dbReference type="ChEBI" id="CHEBI:29105"/>
    </ligand>
</feature>
<feature type="binding site" evidence="1">
    <location>
        <position position="168"/>
    </location>
    <ligand>
        <name>Zn(2+)</name>
        <dbReference type="ChEBI" id="CHEBI:29105"/>
    </ligand>
</feature>
<feature type="binding site" evidence="1">
    <location>
        <position position="228"/>
    </location>
    <ligand>
        <name>Zn(2+)</name>
        <dbReference type="ChEBI" id="CHEBI:29105"/>
    </ligand>
</feature>
<evidence type="ECO:0000250" key="1">
    <source>
        <dbReference type="UniProtKB" id="P06988"/>
    </source>
</evidence>
<evidence type="ECO:0000269" key="2">
    <source>
    </source>
</evidence>
<evidence type="ECO:0000303" key="3">
    <source>
    </source>
</evidence>
<evidence type="ECO:0000305" key="4"/>
<evidence type="ECO:0000305" key="5">
    <source>
    </source>
</evidence>
<proteinExistence type="inferred from homology"/>